<keyword id="KW-0012">Acyltransferase</keyword>
<keyword id="KW-0441">Lipid A biosynthesis</keyword>
<keyword id="KW-0444">Lipid biosynthesis</keyword>
<keyword id="KW-0443">Lipid metabolism</keyword>
<keyword id="KW-0677">Repeat</keyword>
<keyword id="KW-0808">Transferase</keyword>
<sequence>MSVYSLKELAEHIGATSRGNTDVVVDSIAPLDKAQANQLTFISNAKFRPFLAQSQAGILVVSEADIEFCSANSNLLITKNPYVAYALLAQYMDTTPKAASDIASTAVIASSAKLGTNVSIGANAVIEDGVELGDNVVIGAGCFIGKNTKIGANTQLWANVSIYHEVQIGSDCLIQSGAVIGGDGFGYANERGQWIKIPQTGSVIIGNHVEIGACTCIDRGALDSTVIEDNVIIDNLCQIAHNVHIGTGTAVAGGVIMAGSLTVGRYCQIGGASVINGHMEICDQAIVTGMSMILRPITEPGIYSSGIPAQTNKEWRKTAALTLDIDKMNKRLKALEKKLAD</sequence>
<evidence type="ECO:0000255" key="1">
    <source>
        <dbReference type="HAMAP-Rule" id="MF_00523"/>
    </source>
</evidence>
<name>LPXD_MANSM</name>
<comment type="function">
    <text evidence="1">Catalyzes the N-acylation of UDP-3-O-acylglucosamine using 3-hydroxyacyl-ACP as the acyl donor. Is involved in the biosynthesis of lipid A, a phosphorylated glycolipid that anchors the lipopolysaccharide to the outer membrane of the cell.</text>
</comment>
<comment type="catalytic activity">
    <reaction evidence="1">
        <text>a UDP-3-O-[(3R)-3-hydroxyacyl]-alpha-D-glucosamine + a (3R)-hydroxyacyl-[ACP] = a UDP-2-N,3-O-bis[(3R)-3-hydroxyacyl]-alpha-D-glucosamine + holo-[ACP] + H(+)</text>
        <dbReference type="Rhea" id="RHEA:53836"/>
        <dbReference type="Rhea" id="RHEA-COMP:9685"/>
        <dbReference type="Rhea" id="RHEA-COMP:9945"/>
        <dbReference type="ChEBI" id="CHEBI:15378"/>
        <dbReference type="ChEBI" id="CHEBI:64479"/>
        <dbReference type="ChEBI" id="CHEBI:78827"/>
        <dbReference type="ChEBI" id="CHEBI:137740"/>
        <dbReference type="ChEBI" id="CHEBI:137748"/>
        <dbReference type="EC" id="2.3.1.191"/>
    </reaction>
</comment>
<comment type="pathway">
    <text evidence="1">Bacterial outer membrane biogenesis; LPS lipid A biosynthesis.</text>
</comment>
<comment type="subunit">
    <text evidence="1">Homotrimer.</text>
</comment>
<comment type="similarity">
    <text evidence="1">Belongs to the transferase hexapeptide repeat family. LpxD subfamily.</text>
</comment>
<dbReference type="EC" id="2.3.1.191" evidence="1"/>
<dbReference type="EMBL" id="AE016827">
    <property type="protein sequence ID" value="AAU38529.1"/>
    <property type="molecule type" value="Genomic_DNA"/>
</dbReference>
<dbReference type="RefSeq" id="WP_011201082.1">
    <property type="nucleotide sequence ID" value="NC_006300.1"/>
</dbReference>
<dbReference type="SMR" id="Q65R81"/>
<dbReference type="STRING" id="221988.MS1922"/>
<dbReference type="KEGG" id="msu:MS1922"/>
<dbReference type="eggNOG" id="COG1044">
    <property type="taxonomic scope" value="Bacteria"/>
</dbReference>
<dbReference type="HOGENOM" id="CLU_049865_0_1_6"/>
<dbReference type="OrthoDB" id="9784739at2"/>
<dbReference type="UniPathway" id="UPA00973"/>
<dbReference type="Proteomes" id="UP000000607">
    <property type="component" value="Chromosome"/>
</dbReference>
<dbReference type="GO" id="GO:0016020">
    <property type="term" value="C:membrane"/>
    <property type="evidence" value="ECO:0007669"/>
    <property type="project" value="GOC"/>
</dbReference>
<dbReference type="GO" id="GO:0016410">
    <property type="term" value="F:N-acyltransferase activity"/>
    <property type="evidence" value="ECO:0007669"/>
    <property type="project" value="InterPro"/>
</dbReference>
<dbReference type="GO" id="GO:0009245">
    <property type="term" value="P:lipid A biosynthetic process"/>
    <property type="evidence" value="ECO:0007669"/>
    <property type="project" value="UniProtKB-UniRule"/>
</dbReference>
<dbReference type="CDD" id="cd03352">
    <property type="entry name" value="LbH_LpxD"/>
    <property type="match status" value="1"/>
</dbReference>
<dbReference type="FunFam" id="2.160.10.10:FF:000005">
    <property type="entry name" value="UDP-3-O-(3-hydroxymyristoyl)glucosamine N-acyltransferase"/>
    <property type="match status" value="1"/>
</dbReference>
<dbReference type="Gene3D" id="1.20.5.170">
    <property type="match status" value="1"/>
</dbReference>
<dbReference type="Gene3D" id="2.160.10.10">
    <property type="entry name" value="Hexapeptide repeat proteins"/>
    <property type="match status" value="1"/>
</dbReference>
<dbReference type="Gene3D" id="3.40.1390.10">
    <property type="entry name" value="MurE/MurF, N-terminal domain"/>
    <property type="match status" value="1"/>
</dbReference>
<dbReference type="HAMAP" id="MF_00523">
    <property type="entry name" value="LpxD"/>
    <property type="match status" value="1"/>
</dbReference>
<dbReference type="InterPro" id="IPR001451">
    <property type="entry name" value="Hexapep"/>
</dbReference>
<dbReference type="InterPro" id="IPR018357">
    <property type="entry name" value="Hexapep_transf_CS"/>
</dbReference>
<dbReference type="InterPro" id="IPR007691">
    <property type="entry name" value="LpxD"/>
</dbReference>
<dbReference type="InterPro" id="IPR011004">
    <property type="entry name" value="Trimer_LpxA-like_sf"/>
</dbReference>
<dbReference type="InterPro" id="IPR020573">
    <property type="entry name" value="UDP_GlcNAc_AcTrfase_non-rep"/>
</dbReference>
<dbReference type="NCBIfam" id="TIGR01853">
    <property type="entry name" value="lipid_A_lpxD"/>
    <property type="match status" value="1"/>
</dbReference>
<dbReference type="NCBIfam" id="NF002060">
    <property type="entry name" value="PRK00892.1"/>
    <property type="match status" value="1"/>
</dbReference>
<dbReference type="PANTHER" id="PTHR43378">
    <property type="entry name" value="UDP-3-O-ACYLGLUCOSAMINE N-ACYLTRANSFERASE"/>
    <property type="match status" value="1"/>
</dbReference>
<dbReference type="PANTHER" id="PTHR43378:SF2">
    <property type="entry name" value="UDP-3-O-ACYLGLUCOSAMINE N-ACYLTRANSFERASE 1, MITOCHONDRIAL-RELATED"/>
    <property type="match status" value="1"/>
</dbReference>
<dbReference type="Pfam" id="PF00132">
    <property type="entry name" value="Hexapep"/>
    <property type="match status" value="2"/>
</dbReference>
<dbReference type="Pfam" id="PF04613">
    <property type="entry name" value="LpxD"/>
    <property type="match status" value="1"/>
</dbReference>
<dbReference type="SUPFAM" id="SSF51161">
    <property type="entry name" value="Trimeric LpxA-like enzymes"/>
    <property type="match status" value="1"/>
</dbReference>
<dbReference type="PROSITE" id="PS00101">
    <property type="entry name" value="HEXAPEP_TRANSFERASES"/>
    <property type="match status" value="4"/>
</dbReference>
<reference key="1">
    <citation type="journal article" date="2004" name="Nat. Biotechnol.">
        <title>The genome sequence of the capnophilic rumen bacterium Mannheimia succiniciproducens.</title>
        <authorList>
            <person name="Hong S.H."/>
            <person name="Kim J.S."/>
            <person name="Lee S.Y."/>
            <person name="In Y.H."/>
            <person name="Choi S.S."/>
            <person name="Rih J.-K."/>
            <person name="Kim C.H."/>
            <person name="Jeong H."/>
            <person name="Hur C.G."/>
            <person name="Kim J.J."/>
        </authorList>
    </citation>
    <scope>NUCLEOTIDE SEQUENCE [LARGE SCALE GENOMIC DNA]</scope>
    <source>
        <strain>KCTC 0769BP / MBEL55E</strain>
    </source>
</reference>
<gene>
    <name evidence="1" type="primary">lpxD</name>
    <name type="ordered locus">MS1922</name>
</gene>
<proteinExistence type="inferred from homology"/>
<organism>
    <name type="scientific">Mannheimia succiniciproducens (strain KCTC 0769BP / MBEL55E)</name>
    <dbReference type="NCBI Taxonomy" id="221988"/>
    <lineage>
        <taxon>Bacteria</taxon>
        <taxon>Pseudomonadati</taxon>
        <taxon>Pseudomonadota</taxon>
        <taxon>Gammaproteobacteria</taxon>
        <taxon>Pasteurellales</taxon>
        <taxon>Pasteurellaceae</taxon>
        <taxon>Basfia</taxon>
    </lineage>
</organism>
<protein>
    <recommendedName>
        <fullName evidence="1">UDP-3-O-acylglucosamine N-acyltransferase</fullName>
        <ecNumber evidence="1">2.3.1.191</ecNumber>
    </recommendedName>
</protein>
<accession>Q65R81</accession>
<feature type="chain" id="PRO_0000059681" description="UDP-3-O-acylglucosamine N-acyltransferase">
    <location>
        <begin position="1"/>
        <end position="341"/>
    </location>
</feature>
<feature type="active site" description="Proton acceptor" evidence="1">
    <location>
        <position position="241"/>
    </location>
</feature>